<name>Y658_CHLPN</name>
<gene>
    <name type="ordered locus">CPn_0658</name>
    <name type="ordered locus">CP_0089</name>
    <name type="ordered locus">CPj0658</name>
    <name type="ordered locus">CpB0684</name>
</gene>
<comment type="similarity">
    <text evidence="1">Belongs to the chlamydial CPn_0658/CT_538/TC_0825 family.</text>
</comment>
<accession>Q9Z7P6</accession>
<proteinExistence type="inferred from homology"/>
<evidence type="ECO:0000305" key="1"/>
<organism>
    <name type="scientific">Chlamydia pneumoniae</name>
    <name type="common">Chlamydophila pneumoniae</name>
    <dbReference type="NCBI Taxonomy" id="83558"/>
    <lineage>
        <taxon>Bacteria</taxon>
        <taxon>Pseudomonadati</taxon>
        <taxon>Chlamydiota</taxon>
        <taxon>Chlamydiia</taxon>
        <taxon>Chlamydiales</taxon>
        <taxon>Chlamydiaceae</taxon>
        <taxon>Chlamydia/Chlamydophila group</taxon>
        <taxon>Chlamydia</taxon>
    </lineage>
</organism>
<protein>
    <recommendedName>
        <fullName>Protein CPn_0658/CP_0089/CPj0658/CpB0684</fullName>
    </recommendedName>
</protein>
<reference key="1">
    <citation type="journal article" date="1999" name="Nat. Genet.">
        <title>Comparative genomes of Chlamydia pneumoniae and C. trachomatis.</title>
        <authorList>
            <person name="Kalman S."/>
            <person name="Mitchell W.P."/>
            <person name="Marathe R."/>
            <person name="Lammel C.J."/>
            <person name="Fan J."/>
            <person name="Hyman R.W."/>
            <person name="Olinger L."/>
            <person name="Grimwood J."/>
            <person name="Davis R.W."/>
            <person name="Stephens R.S."/>
        </authorList>
    </citation>
    <scope>NUCLEOTIDE SEQUENCE [LARGE SCALE GENOMIC DNA]</scope>
    <source>
        <strain>CWL029</strain>
    </source>
</reference>
<reference key="2">
    <citation type="journal article" date="2000" name="Nucleic Acids Res.">
        <title>Genome sequences of Chlamydia trachomatis MoPn and Chlamydia pneumoniae AR39.</title>
        <authorList>
            <person name="Read T.D."/>
            <person name="Brunham R.C."/>
            <person name="Shen C."/>
            <person name="Gill S.R."/>
            <person name="Heidelberg J.F."/>
            <person name="White O."/>
            <person name="Hickey E.K."/>
            <person name="Peterson J.D."/>
            <person name="Utterback T.R."/>
            <person name="Berry K.J."/>
            <person name="Bass S."/>
            <person name="Linher K.D."/>
            <person name="Weidman J.F."/>
            <person name="Khouri H.M."/>
            <person name="Craven B."/>
            <person name="Bowman C."/>
            <person name="Dodson R.J."/>
            <person name="Gwinn M.L."/>
            <person name="Nelson W.C."/>
            <person name="DeBoy R.T."/>
            <person name="Kolonay J.F."/>
            <person name="McClarty G."/>
            <person name="Salzberg S.L."/>
            <person name="Eisen J.A."/>
            <person name="Fraser C.M."/>
        </authorList>
    </citation>
    <scope>NUCLEOTIDE SEQUENCE [LARGE SCALE GENOMIC DNA]</scope>
    <source>
        <strain>AR39</strain>
    </source>
</reference>
<reference key="3">
    <citation type="journal article" date="2000" name="Nucleic Acids Res.">
        <title>Comparison of whole genome sequences of Chlamydia pneumoniae J138 from Japan and CWL029 from USA.</title>
        <authorList>
            <person name="Shirai M."/>
            <person name="Hirakawa H."/>
            <person name="Kimoto M."/>
            <person name="Tabuchi M."/>
            <person name="Kishi F."/>
            <person name="Ouchi K."/>
            <person name="Shiba T."/>
            <person name="Ishii K."/>
            <person name="Hattori M."/>
            <person name="Kuhara S."/>
            <person name="Nakazawa T."/>
        </authorList>
    </citation>
    <scope>NUCLEOTIDE SEQUENCE [LARGE SCALE GENOMIC DNA]</scope>
    <source>
        <strain>J138</strain>
    </source>
</reference>
<reference key="4">
    <citation type="submission" date="2002-05" db="EMBL/GenBank/DDBJ databases">
        <title>The genome sequence of Chlamydia pneumoniae TW183 and comparison with other Chlamydia strains based on whole genome sequence analysis.</title>
        <authorList>
            <person name="Geng M.M."/>
            <person name="Schuhmacher A."/>
            <person name="Muehldorfer I."/>
            <person name="Bensch K.W."/>
            <person name="Schaefer K.P."/>
            <person name="Schneider S."/>
            <person name="Pohl T."/>
            <person name="Essig A."/>
            <person name="Marre R."/>
            <person name="Melchers K."/>
        </authorList>
    </citation>
    <scope>NUCLEOTIDE SEQUENCE [LARGE SCALE GENOMIC DNA]</scope>
    <source>
        <strain>TW-183</strain>
    </source>
</reference>
<feature type="chain" id="PRO_0000218407" description="Protein CPn_0658/CP_0089/CPj0658/CpB0684">
    <location>
        <begin position="1"/>
        <end position="238"/>
    </location>
</feature>
<sequence>MDISGAVKQKLLQFLGKQKKPELLATYLFYLEQALSLRPVVFVRDKIIFKTPEDAVRILEQDKKIWRETEIQISSEKPQVNENTKRIYICPFTGKVFADNVYANPQDAIYDWLSSCPQNMEKQGGVRIKRFLVSEDPDVIKEYAVPPKEPIIKTVFASAITGKLFHSLPPLLEDFISSYLRPMTLEEVQNQTKFQLESSFLSLLQDALVEDKIAAFIESLADDTAFHVYISQWVDTEE</sequence>
<dbReference type="EMBL" id="AE001363">
    <property type="protein sequence ID" value="AAD18797.1"/>
    <property type="molecule type" value="Genomic_DNA"/>
</dbReference>
<dbReference type="EMBL" id="AE002161">
    <property type="protein sequence ID" value="AAF37974.1"/>
    <property type="molecule type" value="Genomic_DNA"/>
</dbReference>
<dbReference type="EMBL" id="BA000008">
    <property type="protein sequence ID" value="BAA98865.1"/>
    <property type="molecule type" value="Genomic_DNA"/>
</dbReference>
<dbReference type="EMBL" id="AE009440">
    <property type="protein sequence ID" value="AAP98613.1"/>
    <property type="molecule type" value="Genomic_DNA"/>
</dbReference>
<dbReference type="PIR" id="C72052">
    <property type="entry name" value="C72052"/>
</dbReference>
<dbReference type="PIR" id="G86572">
    <property type="entry name" value="G86572"/>
</dbReference>
<dbReference type="RefSeq" id="NP_224854.1">
    <property type="nucleotide sequence ID" value="NC_000922.1"/>
</dbReference>
<dbReference type="RefSeq" id="WP_010883296.1">
    <property type="nucleotide sequence ID" value="NZ_LN847257.1"/>
</dbReference>
<dbReference type="STRING" id="406984.CPK_ORF00058"/>
<dbReference type="GeneID" id="45050708"/>
<dbReference type="KEGG" id="cpa:CP_0089"/>
<dbReference type="KEGG" id="cpj:CPj0658"/>
<dbReference type="KEGG" id="cpn:CPn_0658"/>
<dbReference type="KEGG" id="cpt:CpB0684"/>
<dbReference type="PATRIC" id="fig|115713.3.peg.728"/>
<dbReference type="eggNOG" id="ENOG502ZAKZ">
    <property type="taxonomic scope" value="Bacteria"/>
</dbReference>
<dbReference type="HOGENOM" id="CLU_1164241_0_0_0"/>
<dbReference type="OMA" id="WVSKCPE"/>
<dbReference type="OrthoDB" id="20318at2"/>
<dbReference type="Proteomes" id="UP000000583">
    <property type="component" value="Chromosome"/>
</dbReference>
<dbReference type="Proteomes" id="UP000000801">
    <property type="component" value="Chromosome"/>
</dbReference>
<dbReference type="InterPro" id="IPR024484">
    <property type="entry name" value="DUF2709"/>
</dbReference>
<dbReference type="Pfam" id="PF10915">
    <property type="entry name" value="DUF2709"/>
    <property type="match status" value="1"/>
</dbReference>